<proteinExistence type="inferred from homology"/>
<name>PYRB_NITV9</name>
<evidence type="ECO:0000255" key="1">
    <source>
        <dbReference type="HAMAP-Rule" id="MF_00001"/>
    </source>
</evidence>
<protein>
    <recommendedName>
        <fullName evidence="1">Aspartate carbamoyltransferase catalytic subunit</fullName>
        <ecNumber evidence="1">2.1.3.2</ecNumber>
    </recommendedName>
    <alternativeName>
        <fullName evidence="1">Aspartate transcarbamylase</fullName>
        <shortName evidence="1">ATCase</shortName>
    </alternativeName>
</protein>
<feature type="chain" id="PRO_1000191903" description="Aspartate carbamoyltransferase catalytic subunit">
    <location>
        <begin position="1"/>
        <end position="325"/>
    </location>
</feature>
<feature type="binding site" evidence="1">
    <location>
        <position position="64"/>
    </location>
    <ligand>
        <name>carbamoyl phosphate</name>
        <dbReference type="ChEBI" id="CHEBI:58228"/>
    </ligand>
</feature>
<feature type="binding site" evidence="1">
    <location>
        <position position="65"/>
    </location>
    <ligand>
        <name>carbamoyl phosphate</name>
        <dbReference type="ChEBI" id="CHEBI:58228"/>
    </ligand>
</feature>
<feature type="binding site" evidence="1">
    <location>
        <position position="92"/>
    </location>
    <ligand>
        <name>L-aspartate</name>
        <dbReference type="ChEBI" id="CHEBI:29991"/>
    </ligand>
</feature>
<feature type="binding site" evidence="1">
    <location>
        <position position="114"/>
    </location>
    <ligand>
        <name>carbamoyl phosphate</name>
        <dbReference type="ChEBI" id="CHEBI:58228"/>
    </ligand>
</feature>
<feature type="binding site" evidence="1">
    <location>
        <position position="142"/>
    </location>
    <ligand>
        <name>carbamoyl phosphate</name>
        <dbReference type="ChEBI" id="CHEBI:58228"/>
    </ligand>
</feature>
<feature type="binding site" evidence="1">
    <location>
        <position position="145"/>
    </location>
    <ligand>
        <name>carbamoyl phosphate</name>
        <dbReference type="ChEBI" id="CHEBI:58228"/>
    </ligand>
</feature>
<feature type="binding site" evidence="1">
    <location>
        <position position="176"/>
    </location>
    <ligand>
        <name>L-aspartate</name>
        <dbReference type="ChEBI" id="CHEBI:29991"/>
    </ligand>
</feature>
<feature type="binding site" evidence="1">
    <location>
        <position position="230"/>
    </location>
    <ligand>
        <name>L-aspartate</name>
        <dbReference type="ChEBI" id="CHEBI:29991"/>
    </ligand>
</feature>
<feature type="binding site" evidence="1">
    <location>
        <position position="271"/>
    </location>
    <ligand>
        <name>carbamoyl phosphate</name>
        <dbReference type="ChEBI" id="CHEBI:58228"/>
    </ligand>
</feature>
<feature type="binding site" evidence="1">
    <location>
        <position position="272"/>
    </location>
    <ligand>
        <name>carbamoyl phosphate</name>
        <dbReference type="ChEBI" id="CHEBI:58228"/>
    </ligand>
</feature>
<keyword id="KW-0665">Pyrimidine biosynthesis</keyword>
<keyword id="KW-0808">Transferase</keyword>
<comment type="function">
    <text evidence="1">Catalyzes the condensation of carbamoyl phosphate and aspartate to form carbamoyl aspartate and inorganic phosphate, the committed step in the de novo pyrimidine nucleotide biosynthesis pathway.</text>
</comment>
<comment type="catalytic activity">
    <reaction evidence="1">
        <text>carbamoyl phosphate + L-aspartate = N-carbamoyl-L-aspartate + phosphate + H(+)</text>
        <dbReference type="Rhea" id="RHEA:20013"/>
        <dbReference type="ChEBI" id="CHEBI:15378"/>
        <dbReference type="ChEBI" id="CHEBI:29991"/>
        <dbReference type="ChEBI" id="CHEBI:32814"/>
        <dbReference type="ChEBI" id="CHEBI:43474"/>
        <dbReference type="ChEBI" id="CHEBI:58228"/>
        <dbReference type="EC" id="2.1.3.2"/>
    </reaction>
</comment>
<comment type="pathway">
    <text evidence="1">Pyrimidine metabolism; UMP biosynthesis via de novo pathway; (S)-dihydroorotate from bicarbonate: step 2/3.</text>
</comment>
<comment type="subunit">
    <text evidence="1">Heterododecamer (2C3:3R2) of six catalytic PyrB chains organized as two trimers (C3), and six regulatory PyrI chains organized as three dimers (R2).</text>
</comment>
<comment type="similarity">
    <text evidence="1">Belongs to the aspartate/ornithine carbamoyltransferase superfamily. ATCase family.</text>
</comment>
<organism>
    <name type="scientific">Nitratidesulfovibrio vulgaris (strain DSM 19637 / Miyazaki F)</name>
    <name type="common">Desulfovibrio vulgaris</name>
    <dbReference type="NCBI Taxonomy" id="883"/>
    <lineage>
        <taxon>Bacteria</taxon>
        <taxon>Pseudomonadati</taxon>
        <taxon>Thermodesulfobacteriota</taxon>
        <taxon>Desulfovibrionia</taxon>
        <taxon>Desulfovibrionales</taxon>
        <taxon>Desulfovibrionaceae</taxon>
        <taxon>Nitratidesulfovibrio</taxon>
    </lineage>
</organism>
<gene>
    <name evidence="1" type="primary">pyrB</name>
    <name type="ordered locus">DvMF_1425</name>
</gene>
<reference key="1">
    <citation type="submission" date="2008-10" db="EMBL/GenBank/DDBJ databases">
        <title>Complete sequence of Desulfovibrio vulgaris str. 'Miyazaki F'.</title>
        <authorList>
            <person name="Lucas S."/>
            <person name="Copeland A."/>
            <person name="Lapidus A."/>
            <person name="Glavina del Rio T."/>
            <person name="Dalin E."/>
            <person name="Tice H."/>
            <person name="Bruce D."/>
            <person name="Goodwin L."/>
            <person name="Pitluck S."/>
            <person name="Sims D."/>
            <person name="Brettin T."/>
            <person name="Detter J.C."/>
            <person name="Han C."/>
            <person name="Larimer F."/>
            <person name="Land M."/>
            <person name="Hauser L."/>
            <person name="Kyrpides N."/>
            <person name="Mikhailova N."/>
            <person name="Hazen T.C."/>
            <person name="Richardson P."/>
        </authorList>
    </citation>
    <scope>NUCLEOTIDE SEQUENCE [LARGE SCALE GENOMIC DNA]</scope>
    <source>
        <strain>DSM 19637 / Miyazaki F</strain>
    </source>
</reference>
<dbReference type="EC" id="2.1.3.2" evidence="1"/>
<dbReference type="EMBL" id="CP001197">
    <property type="protein sequence ID" value="ACL08373.1"/>
    <property type="molecule type" value="Genomic_DNA"/>
</dbReference>
<dbReference type="SMR" id="B8DRT6"/>
<dbReference type="STRING" id="883.DvMF_1425"/>
<dbReference type="KEGG" id="dvm:DvMF_1425"/>
<dbReference type="eggNOG" id="COG0540">
    <property type="taxonomic scope" value="Bacteria"/>
</dbReference>
<dbReference type="HOGENOM" id="CLU_043846_2_0_7"/>
<dbReference type="OrthoDB" id="9774690at2"/>
<dbReference type="UniPathway" id="UPA00070">
    <property type="reaction ID" value="UER00116"/>
</dbReference>
<dbReference type="GO" id="GO:0005829">
    <property type="term" value="C:cytosol"/>
    <property type="evidence" value="ECO:0007669"/>
    <property type="project" value="TreeGrafter"/>
</dbReference>
<dbReference type="GO" id="GO:0016597">
    <property type="term" value="F:amino acid binding"/>
    <property type="evidence" value="ECO:0007669"/>
    <property type="project" value="InterPro"/>
</dbReference>
<dbReference type="GO" id="GO:0004070">
    <property type="term" value="F:aspartate carbamoyltransferase activity"/>
    <property type="evidence" value="ECO:0007669"/>
    <property type="project" value="UniProtKB-UniRule"/>
</dbReference>
<dbReference type="GO" id="GO:0006207">
    <property type="term" value="P:'de novo' pyrimidine nucleobase biosynthetic process"/>
    <property type="evidence" value="ECO:0007669"/>
    <property type="project" value="InterPro"/>
</dbReference>
<dbReference type="GO" id="GO:0044205">
    <property type="term" value="P:'de novo' UMP biosynthetic process"/>
    <property type="evidence" value="ECO:0007669"/>
    <property type="project" value="UniProtKB-UniRule"/>
</dbReference>
<dbReference type="GO" id="GO:0006520">
    <property type="term" value="P:amino acid metabolic process"/>
    <property type="evidence" value="ECO:0007669"/>
    <property type="project" value="InterPro"/>
</dbReference>
<dbReference type="Gene3D" id="3.40.50.1370">
    <property type="entry name" value="Aspartate/ornithine carbamoyltransferase"/>
    <property type="match status" value="2"/>
</dbReference>
<dbReference type="HAMAP" id="MF_00001">
    <property type="entry name" value="Asp_carb_tr"/>
    <property type="match status" value="1"/>
</dbReference>
<dbReference type="InterPro" id="IPR006132">
    <property type="entry name" value="Asp/Orn_carbamoyltranf_P-bd"/>
</dbReference>
<dbReference type="InterPro" id="IPR006130">
    <property type="entry name" value="Asp/Orn_carbamoylTrfase"/>
</dbReference>
<dbReference type="InterPro" id="IPR036901">
    <property type="entry name" value="Asp/Orn_carbamoylTrfase_sf"/>
</dbReference>
<dbReference type="InterPro" id="IPR002082">
    <property type="entry name" value="Asp_carbamoyltransf"/>
</dbReference>
<dbReference type="InterPro" id="IPR006131">
    <property type="entry name" value="Asp_carbamoyltransf_Asp/Orn-bd"/>
</dbReference>
<dbReference type="NCBIfam" id="TIGR00670">
    <property type="entry name" value="asp_carb_tr"/>
    <property type="match status" value="1"/>
</dbReference>
<dbReference type="NCBIfam" id="NF002032">
    <property type="entry name" value="PRK00856.1"/>
    <property type="match status" value="1"/>
</dbReference>
<dbReference type="PANTHER" id="PTHR45753:SF6">
    <property type="entry name" value="ASPARTATE CARBAMOYLTRANSFERASE"/>
    <property type="match status" value="1"/>
</dbReference>
<dbReference type="PANTHER" id="PTHR45753">
    <property type="entry name" value="ORNITHINE CARBAMOYLTRANSFERASE, MITOCHONDRIAL"/>
    <property type="match status" value="1"/>
</dbReference>
<dbReference type="Pfam" id="PF00185">
    <property type="entry name" value="OTCace"/>
    <property type="match status" value="1"/>
</dbReference>
<dbReference type="Pfam" id="PF02729">
    <property type="entry name" value="OTCace_N"/>
    <property type="match status" value="1"/>
</dbReference>
<dbReference type="PRINTS" id="PR00100">
    <property type="entry name" value="AOTCASE"/>
</dbReference>
<dbReference type="PRINTS" id="PR00101">
    <property type="entry name" value="ATCASE"/>
</dbReference>
<dbReference type="SUPFAM" id="SSF53671">
    <property type="entry name" value="Aspartate/ornithine carbamoyltransferase"/>
    <property type="match status" value="1"/>
</dbReference>
<dbReference type="PROSITE" id="PS00097">
    <property type="entry name" value="CARBAMOYLTRANSFERASE"/>
    <property type="match status" value="1"/>
</dbReference>
<sequence>MQHAQRPTWPHKDLLDVTQLTRAELFHLLDTAAQFHDINRRPVKKVPTLKGKSVVLFFAEPSTRTKTSFDVAGKRLSADTFSLAKSGSSLSKGESLKDTALTLQAMTPDIIVIRHSSSGAAQFLAERLDCSVVNAGDGWHAHPTQALLDCYSLRQVWGDTFEGRTLLILGDIAHSRVARSNVHLLSSLGVKVRLCAPRTLLPAGVHNWPVTIFNRLDDAVQGVDAVMCLRLQLERQQAGLLPDLREYAQRFCLSPRHLTMAAPSARVLHPGPMNRGLEISSVLADAPESLILDQVAAGVATRMAILFLLATRTGIEQTADNGGRA</sequence>
<accession>B8DRT6</accession>